<gene>
    <name type="primary">Nanog</name>
    <name type="synonym">Stm1</name>
</gene>
<feature type="chain" id="PRO_0000261420" description="Homeobox protein NANOG">
    <location>
        <begin position="1"/>
        <end position="305"/>
    </location>
</feature>
<feature type="repeat" description="1">
    <location>
        <begin position="198"/>
        <end position="202"/>
    </location>
</feature>
<feature type="repeat" description="2">
    <location>
        <begin position="203"/>
        <end position="207"/>
    </location>
</feature>
<feature type="repeat" description="3">
    <location>
        <begin position="208"/>
        <end position="212"/>
    </location>
</feature>
<feature type="repeat" description="4">
    <location>
        <begin position="213"/>
        <end position="217"/>
    </location>
</feature>
<feature type="repeat" description="5">
    <location>
        <begin position="218"/>
        <end position="222"/>
    </location>
</feature>
<feature type="repeat" description="6">
    <location>
        <begin position="223"/>
        <end position="227"/>
    </location>
</feature>
<feature type="repeat" description="7">
    <location>
        <begin position="228"/>
        <end position="232"/>
    </location>
</feature>
<feature type="repeat" description="8">
    <location>
        <begin position="233"/>
        <end position="237"/>
    </location>
</feature>
<feature type="repeat" description="9">
    <location>
        <begin position="238"/>
        <end position="242"/>
    </location>
</feature>
<feature type="repeat" description="10">
    <location>
        <begin position="243"/>
        <end position="247"/>
    </location>
</feature>
<feature type="region of interest" description="Disordered" evidence="5">
    <location>
        <begin position="1"/>
        <end position="30"/>
    </location>
</feature>
<feature type="region of interest" description="Disordered" evidence="5">
    <location>
        <begin position="46"/>
        <end position="95"/>
    </location>
</feature>
<feature type="region of interest" description="Required for DNA-binding" evidence="3">
    <location>
        <begin position="123"/>
        <end position="152"/>
    </location>
</feature>
<feature type="region of interest" description="10 X repeats starting with a Trp in each unit">
    <location>
        <begin position="198"/>
        <end position="247"/>
    </location>
</feature>
<feature type="region of interest" description="Sufficient for transactivation activity" evidence="1">
    <location>
        <begin position="198"/>
        <end position="247"/>
    </location>
</feature>
<feature type="region of interest" description="Sufficient for strong transactivation activity" evidence="1">
    <location>
        <begin position="248"/>
        <end position="305"/>
    </location>
</feature>
<feature type="compositionally biased region" description="Low complexity" evidence="5">
    <location>
        <begin position="13"/>
        <end position="25"/>
    </location>
</feature>
<feature type="compositionally biased region" description="Polar residues" evidence="5">
    <location>
        <begin position="65"/>
        <end position="77"/>
    </location>
</feature>
<dbReference type="EMBL" id="AB126939">
    <property type="protein sequence ID" value="BAD72892.1"/>
    <property type="molecule type" value="mRNA"/>
</dbReference>
<dbReference type="SMR" id="Q5TM83"/>
<dbReference type="AGR" id="MGI:1919200"/>
<dbReference type="MGI" id="MGI:1919200">
    <property type="gene designation" value="Nanog"/>
</dbReference>
<dbReference type="GO" id="GO:0005634">
    <property type="term" value="C:nucleus"/>
    <property type="evidence" value="ECO:0007669"/>
    <property type="project" value="UniProtKB-SubCell"/>
</dbReference>
<dbReference type="GO" id="GO:0003700">
    <property type="term" value="F:DNA-binding transcription factor activity"/>
    <property type="evidence" value="ECO:0000250"/>
    <property type="project" value="UniProtKB"/>
</dbReference>
<dbReference type="GO" id="GO:0001227">
    <property type="term" value="F:DNA-binding transcription repressor activity, RNA polymerase II-specific"/>
    <property type="evidence" value="ECO:0000250"/>
    <property type="project" value="UniProtKB"/>
</dbReference>
<dbReference type="GO" id="GO:0000978">
    <property type="term" value="F:RNA polymerase II cis-regulatory region sequence-specific DNA binding"/>
    <property type="evidence" value="ECO:0007669"/>
    <property type="project" value="TreeGrafter"/>
</dbReference>
<dbReference type="CDD" id="cd00086">
    <property type="entry name" value="homeodomain"/>
    <property type="match status" value="1"/>
</dbReference>
<dbReference type="FunFam" id="1.10.10.60:FF:000203">
    <property type="entry name" value="Nanog homeobox transcription factor"/>
    <property type="match status" value="1"/>
</dbReference>
<dbReference type="Gene3D" id="1.10.10.60">
    <property type="entry name" value="Homeodomain-like"/>
    <property type="match status" value="1"/>
</dbReference>
<dbReference type="InterPro" id="IPR050460">
    <property type="entry name" value="Distal-less_Homeobox_TF"/>
</dbReference>
<dbReference type="InterPro" id="IPR001356">
    <property type="entry name" value="HD"/>
</dbReference>
<dbReference type="InterPro" id="IPR017970">
    <property type="entry name" value="Homeobox_CS"/>
</dbReference>
<dbReference type="InterPro" id="IPR009057">
    <property type="entry name" value="Homeodomain-like_sf"/>
</dbReference>
<dbReference type="PANTHER" id="PTHR24327">
    <property type="entry name" value="HOMEOBOX PROTEIN"/>
    <property type="match status" value="1"/>
</dbReference>
<dbReference type="PANTHER" id="PTHR24327:SF72">
    <property type="entry name" value="HOMEOBOX PROTEIN NANOG"/>
    <property type="match status" value="1"/>
</dbReference>
<dbReference type="Pfam" id="PF00046">
    <property type="entry name" value="Homeodomain"/>
    <property type="match status" value="1"/>
</dbReference>
<dbReference type="SMART" id="SM00389">
    <property type="entry name" value="HOX"/>
    <property type="match status" value="1"/>
</dbReference>
<dbReference type="SUPFAM" id="SSF46689">
    <property type="entry name" value="Homeodomain-like"/>
    <property type="match status" value="1"/>
</dbReference>
<dbReference type="PROSITE" id="PS00027">
    <property type="entry name" value="HOMEOBOX_1"/>
    <property type="match status" value="1"/>
</dbReference>
<dbReference type="PROSITE" id="PS50071">
    <property type="entry name" value="HOMEOBOX_2"/>
    <property type="match status" value="1"/>
</dbReference>
<organism>
    <name type="scientific">Mus musculus molossinus</name>
    <name type="common">Japanese house mouse</name>
    <dbReference type="NCBI Taxonomy" id="57486"/>
    <lineage>
        <taxon>Eukaryota</taxon>
        <taxon>Metazoa</taxon>
        <taxon>Chordata</taxon>
        <taxon>Craniata</taxon>
        <taxon>Vertebrata</taxon>
        <taxon>Euteleostomi</taxon>
        <taxon>Mammalia</taxon>
        <taxon>Eutheria</taxon>
        <taxon>Euarchontoglires</taxon>
        <taxon>Glires</taxon>
        <taxon>Rodentia</taxon>
        <taxon>Myomorpha</taxon>
        <taxon>Muroidea</taxon>
        <taxon>Muridae</taxon>
        <taxon>Murinae</taxon>
        <taxon>Mus</taxon>
        <taxon>Mus</taxon>
    </lineage>
</organism>
<accession>Q5TM83</accession>
<reference key="1">
    <citation type="journal article" date="2005" name="Mech. Dev.">
        <title>Pluripotential competence of cells associated with Nanog activity.</title>
        <authorList>
            <person name="Hatano S.Y."/>
            <person name="Tada M."/>
            <person name="Kimura H."/>
            <person name="Yamaguchi S."/>
            <person name="Kono T."/>
            <person name="Nakano T."/>
            <person name="Suemori H."/>
            <person name="Nakatsuji N."/>
            <person name="Tada T."/>
        </authorList>
    </citation>
    <scope>NUCLEOTIDE SEQUENCE [MRNA]</scope>
</reference>
<evidence type="ECO:0000250" key="1"/>
<evidence type="ECO:0000250" key="2">
    <source>
        <dbReference type="UniProtKB" id="Q80Z64"/>
    </source>
</evidence>
<evidence type="ECO:0000250" key="3">
    <source>
        <dbReference type="UniProtKB" id="Q9H9S0"/>
    </source>
</evidence>
<evidence type="ECO:0000255" key="4">
    <source>
        <dbReference type="PROSITE-ProRule" id="PRU00108"/>
    </source>
</evidence>
<evidence type="ECO:0000256" key="5">
    <source>
        <dbReference type="SAM" id="MobiDB-lite"/>
    </source>
</evidence>
<evidence type="ECO:0000305" key="6"/>
<protein>
    <recommendedName>
        <fullName>Homeobox protein NANOG</fullName>
    </recommendedName>
    <alternativeName>
        <fullName>Homeobox transcription factor Nanog</fullName>
    </alternativeName>
</protein>
<name>NANOG_MUSMM</name>
<proteinExistence type="evidence at transcript level"/>
<sequence length="305" mass="34194">MSVGLPGPHSLPSSEEASNSGNASSMPAVFHPENYSCLQGSATEMLCTEAASPRPSSEDLPLQGSPDSSTSPKQKLSSPEADKGPEEEENKVLARKQKMRTVFSQAQLCALKDRFQKQKYLSLQQMQELSSILNLSYKQVKTWFQNQRMKCKRWQKNQWLKTSNGLIQKGSAPVEYPSIHCSYPQGYLVNASGSLSMWGSQTWTNPTWSSQTWTNPTWNNQTWTNPTWSSQAWTAQSWNGQPWNAAPLHNFGEDFLQPYIQLQQNSSASDLEVNLEATRESHAHFSTPQALELFLNYSVTPPGEI</sequence>
<keyword id="KW-0010">Activator</keyword>
<keyword id="KW-0217">Developmental protein</keyword>
<keyword id="KW-0238">DNA-binding</keyword>
<keyword id="KW-0371">Homeobox</keyword>
<keyword id="KW-0539">Nucleus</keyword>
<keyword id="KW-0677">Repeat</keyword>
<keyword id="KW-0678">Repressor</keyword>
<keyword id="KW-0804">Transcription</keyword>
<keyword id="KW-0805">Transcription regulation</keyword>
<comment type="function">
    <text evidence="1 2 3">Transcription regulator involved in inner cell mass and embryonic stem (ES) cells proliferation and self-renewal. Imposes pluripotency on ES cells and prevents their differentiation towards extraembryonic endoderm and trophectoderm lineages. Blocks bone morphogenetic protein-induced mesoderm differentiation of ES cells by physically interacting with SMAD1 and interfering with the recruitment of coactivators to the active SMAD transcriptional complexes. Acts as a transcriptional activator or repressor. Binds optimally to the DNA consensus sequence 5'-TAAT[GT][GT]-3' or 5'-[CG][GA][CG]C[GC]ATTAN[GC]-3'. Binds to the POU5F1/OCT4 promoter. Able to autorepress its expression in differentiating (ES) cells: binds to its own promoter following interaction with ZNF281/ZFP281, leading to recruitment of the NuRD complex and subsequent repression of expression. When overexpressed, promotes cells to enter into S phase and proliferation (By similarity).</text>
</comment>
<comment type="subunit">
    <text evidence="2 3">Interacts with SMAD1. Interacts with SALL4. Interacts with ZNF281/ZFP281 (By similarity). Interacts with PCGF1 (By similarity). Interacts with ESRRB; reciprocally modulates their transcriptional activities. Interacts with NSD2 (By similarity).</text>
</comment>
<comment type="subcellular location">
    <subcellularLocation>
        <location evidence="4">Nucleus</location>
    </subcellularLocation>
</comment>
<comment type="similarity">
    <text evidence="6">Belongs to the Nanog homeobox family.</text>
</comment>